<accession>P0DOM0</accession>
<accession>P33002</accession>
<keyword id="KW-0238">DNA-binding</keyword>
<keyword id="KW-0946">Virion</keyword>
<organism>
    <name type="scientific">Variola virus</name>
    <dbReference type="NCBI Taxonomy" id="10255"/>
    <lineage>
        <taxon>Viruses</taxon>
        <taxon>Varidnaviria</taxon>
        <taxon>Bamfordvirae</taxon>
        <taxon>Nucleocytoviricota</taxon>
        <taxon>Pokkesviricetes</taxon>
        <taxon>Chitovirales</taxon>
        <taxon>Poxviridae</taxon>
        <taxon>Chordopoxvirinae</taxon>
        <taxon>Orthopoxvirus</taxon>
    </lineage>
</organism>
<name>PG082_VARV</name>
<comment type="function">
    <text evidence="1">Binds to the hairpin form of the viral telomeric sequence. Might direct genome encapsidation into the virus particle.</text>
</comment>
<comment type="subcellular location">
    <subcellularLocation>
        <location evidence="1">Virion</location>
    </subcellularLocation>
    <text evidence="1">Present in the virus core.</text>
</comment>
<comment type="induction">
    <text evidence="1">Expressed in the intermediate phase of the viral replicative cycle.</text>
</comment>
<comment type="similarity">
    <text evidence="2">Belongs to the orthopoxvirus OPG082 family.</text>
</comment>
<feature type="chain" id="PRO_0000448202" description="Telomere-binding protein OPG082">
    <location>
        <begin position="1"/>
        <end position="382"/>
    </location>
</feature>
<dbReference type="EMBL" id="L22579">
    <property type="protein sequence ID" value="AAA60808.1"/>
    <property type="molecule type" value="Genomic_DNA"/>
</dbReference>
<dbReference type="PIR" id="T28498">
    <property type="entry name" value="T28498"/>
</dbReference>
<dbReference type="KEGG" id="vg:1486461"/>
<dbReference type="Proteomes" id="UP000119805">
    <property type="component" value="Segment"/>
</dbReference>
<dbReference type="GO" id="GO:0044423">
    <property type="term" value="C:virion component"/>
    <property type="evidence" value="ECO:0007669"/>
    <property type="project" value="UniProtKB-KW"/>
</dbReference>
<dbReference type="GO" id="GO:0003677">
    <property type="term" value="F:DNA binding"/>
    <property type="evidence" value="ECO:0007669"/>
    <property type="project" value="UniProtKB-KW"/>
</dbReference>
<dbReference type="GO" id="GO:0016032">
    <property type="term" value="P:viral process"/>
    <property type="evidence" value="ECO:0007669"/>
    <property type="project" value="InterPro"/>
</dbReference>
<dbReference type="InterPro" id="IPR007674">
    <property type="entry name" value="Poxvirus_F5/I6_dom"/>
</dbReference>
<dbReference type="InterPro" id="IPR022219">
    <property type="entry name" value="Poxvirus_I6_C"/>
</dbReference>
<dbReference type="Pfam" id="PF04595">
    <property type="entry name" value="Pox_I6"/>
    <property type="match status" value="1"/>
</dbReference>
<dbReference type="Pfam" id="PF12562">
    <property type="entry name" value="Pox_I6_C"/>
    <property type="match status" value="1"/>
</dbReference>
<protein>
    <recommendedName>
        <fullName>Telomere-binding protein OPG082</fullName>
    </recommendedName>
    <alternativeName>
        <fullName>Telomere-binding protein I6</fullName>
    </alternativeName>
</protein>
<evidence type="ECO:0000250" key="1">
    <source>
        <dbReference type="UniProtKB" id="P68462"/>
    </source>
</evidence>
<evidence type="ECO:0000305" key="2"/>
<gene>
    <name type="primary">OPG082</name>
    <name type="ORF">I6L</name>
</gene>
<organismHost>
    <name type="scientific">Homo sapiens</name>
    <name type="common">Human</name>
    <dbReference type="NCBI Taxonomy" id="9606"/>
</organismHost>
<reference key="1">
    <citation type="journal article" date="1993" name="Nature">
        <title>Potential virulence determinants in terminal regions of variola smallpox virus genome.</title>
        <authorList>
            <person name="Massung R.F."/>
            <person name="Esposito J.J."/>
            <person name="Liu L.I."/>
            <person name="Qi J."/>
            <person name="Utterback T.R."/>
            <person name="Knight J.C."/>
            <person name="Aubin L."/>
            <person name="Yuran T.E."/>
            <person name="Parsons J.M."/>
            <person name="Loparev V.N."/>
            <person name="Selivanov N.A."/>
            <person name="Cavallaro K.F."/>
            <person name="Kerlavage A.R."/>
            <person name="Mahy B.W.J."/>
            <person name="Venter J.C."/>
        </authorList>
    </citation>
    <scope>NUCLEOTIDE SEQUENCE [GENOMIC DNA]</scope>
    <source>
        <strain>Bangladesh-1975</strain>
    </source>
</reference>
<proteinExistence type="inferred from homology"/>
<sequence length="382" mass="43500">MNNFVKQVASKSLKPTKKLSPSDEVISLNECIISFNLDNFYYCNDGLFTKPINTPEDVLKSLLIMESFAYEKMIIKGLIKILISRAYINDIYFTPFGWLTGIDDDPETHVVIKIIFNSSLISIKSQVIEYLKPYNVNNLSVLTTEKELSINTFNVPDSIPMSIISFFPFDTDFILVILFFGVYNDSYCGISYISPKERLPYIIEILKPLMSEINMLSDEIGRTSSIRIFNSTSVKKFPTNTLTSICEIVYSFDESSFPTPKTFTPLNASPYIPKKIVSLLDLPSNVEIKAISRGGVDFITHINNKRLNTILVIAKDNFLKNSTFSGTFIKENIIWKGIYTYRIIKSSFPVPTIKSVTNKKKICKKHCFVNSQYTTRTLSHIL</sequence>